<protein>
    <recommendedName>
        <fullName evidence="5">Protein LURE 1.6</fullName>
        <shortName evidence="5">AtLURE1.6</shortName>
    </recommendedName>
    <alternativeName>
        <fullName evidence="5">Cysteine-Rich Peptide 810_1.6</fullName>
        <shortName evidence="5">CRP810_1.6</shortName>
    </alternativeName>
    <alternativeName>
        <fullName evidence="4">Defensin-like protein 215</fullName>
    </alternativeName>
</protein>
<dbReference type="EMBL" id="AB016875">
    <property type="status" value="NOT_ANNOTATED_CDS"/>
    <property type="molecule type" value="Genomic_DNA"/>
</dbReference>
<dbReference type="EMBL" id="AB025638">
    <property type="status" value="NOT_ANNOTATED_CDS"/>
    <property type="molecule type" value="Genomic_DNA"/>
</dbReference>
<dbReference type="EMBL" id="CP002688">
    <property type="status" value="NOT_ANNOTATED_CDS"/>
    <property type="molecule type" value="Genomic_DNA"/>
</dbReference>
<dbReference type="EMBL" id="AY803255">
    <property type="protein sequence ID" value="AAX39296.1"/>
    <property type="molecule type" value="mRNA"/>
</dbReference>
<dbReference type="SMR" id="Q4VP07"/>
<dbReference type="STRING" id="3702.Q4VP07"/>
<dbReference type="Araport" id="AT5G43516"/>
<dbReference type="TAIR" id="AT5G43516"/>
<dbReference type="InParanoid" id="Q4VP07"/>
<dbReference type="PRO" id="PR:Q4VP07"/>
<dbReference type="Proteomes" id="UP000006548">
    <property type="component" value="Chromosome 5"/>
</dbReference>
<dbReference type="GO" id="GO:0005576">
    <property type="term" value="C:extracellular region"/>
    <property type="evidence" value="ECO:0007669"/>
    <property type="project" value="UniProtKB-SubCell"/>
</dbReference>
<dbReference type="CDD" id="cd21804">
    <property type="entry name" value="DEFL_AtLURE1-like"/>
    <property type="match status" value="1"/>
</dbReference>
<dbReference type="InterPro" id="IPR047497">
    <property type="entry name" value="DEFL_AtLURE1-like"/>
</dbReference>
<comment type="function">
    <text evidence="2">Pollen tube attractants guiding pollen tubes to the ovular micropyle.</text>
</comment>
<comment type="subcellular location">
    <subcellularLocation>
        <location evidence="2">Secreted</location>
    </subcellularLocation>
</comment>
<comment type="tissue specificity">
    <text evidence="2">Expressed in the pistil. Detected in the synergid cells.</text>
</comment>
<comment type="similarity">
    <text evidence="6">Belongs to the DEFL family.</text>
</comment>
<comment type="caution">
    <text evidence="6">Lacks 1 of the 4 disulfide bonds, which are conserved features of the family.</text>
</comment>
<comment type="sequence caution" evidence="6">
    <conflict type="frameshift">
        <sequence resource="EMBL" id="AB016875"/>
    </conflict>
</comment>
<comment type="sequence caution" evidence="6">
    <conflict type="frameshift">
        <sequence resource="EMBL" id="AB025638"/>
    </conflict>
</comment>
<keyword id="KW-1015">Disulfide bond</keyword>
<keyword id="KW-1185">Reference proteome</keyword>
<keyword id="KW-0964">Secreted</keyword>
<keyword id="KW-0732">Signal</keyword>
<proteinExistence type="inferred from homology"/>
<reference key="1">
    <citation type="journal article" date="1998" name="DNA Res.">
        <title>Structural analysis of Arabidopsis thaliana chromosome 5. VIII. Sequence features of the regions of 1,081,958 bp covered by seventeen physically assigned P1 and TAC clones.</title>
        <authorList>
            <person name="Asamizu E."/>
            <person name="Sato S."/>
            <person name="Kaneko T."/>
            <person name="Nakamura Y."/>
            <person name="Kotani H."/>
            <person name="Miyajima N."/>
            <person name="Tabata S."/>
        </authorList>
    </citation>
    <scope>NUCLEOTIDE SEQUENCE [LARGE SCALE GENOMIC DNA]</scope>
    <source>
        <strain>cv. Columbia</strain>
    </source>
</reference>
<reference key="2">
    <citation type="journal article" date="2000" name="DNA Res.">
        <title>Structural analysis of Arabidopsis thaliana chromosome 5. X. Sequence features of the regions of 3,076,755 bp covered by sixty P1 and TAC clones.</title>
        <authorList>
            <person name="Sato S."/>
            <person name="Nakamura Y."/>
            <person name="Kaneko T."/>
            <person name="Katoh T."/>
            <person name="Asamizu E."/>
            <person name="Kotani H."/>
            <person name="Tabata S."/>
        </authorList>
    </citation>
    <scope>NUCLEOTIDE SEQUENCE [LARGE SCALE GENOMIC DNA]</scope>
    <source>
        <strain>cv. Columbia</strain>
    </source>
</reference>
<reference key="3">
    <citation type="journal article" date="2017" name="Plant J.">
        <title>Araport11: a complete reannotation of the Arabidopsis thaliana reference genome.</title>
        <authorList>
            <person name="Cheng C.Y."/>
            <person name="Krishnakumar V."/>
            <person name="Chan A.P."/>
            <person name="Thibaud-Nissen F."/>
            <person name="Schobel S."/>
            <person name="Town C.D."/>
        </authorList>
    </citation>
    <scope>GENOME REANNOTATION</scope>
    <source>
        <strain>cv. Columbia</strain>
    </source>
</reference>
<reference key="4">
    <citation type="journal article" date="2005" name="Plant Physiol.">
        <title>Genome organization of more than 300 defensin-like genes in Arabidopsis.</title>
        <authorList>
            <person name="Silverstein K.A.T."/>
            <person name="Graham M.A."/>
            <person name="Paape T.D."/>
            <person name="VandenBosch K.A."/>
        </authorList>
    </citation>
    <scope>NUCLEOTIDE SEQUENCE [MRNA] OF 15-76</scope>
    <scope>GENE FAMILY</scope>
</reference>
<reference key="5">
    <citation type="journal article" date="2012" name="PLoS Biol.">
        <title>A species-specific cluster of defensin-like genes encodes diffusible pollen tube attractants in Arabidopsis.</title>
        <authorList>
            <person name="Takeuchi H."/>
            <person name="Higashiyama T."/>
        </authorList>
    </citation>
    <scope>GENE FAMILY</scope>
    <scope>NOMENCLATURE</scope>
</reference>
<sequence>MKLPFIFLITLLIFVSSCTSILINESSDEQRIYSFSPTTSPFDPRSLNQELKIGRIGYCFDCARACMRRGKYIRTCSFERKLCRCSISGIK</sequence>
<accession>Q4VP07</accession>
<feature type="signal peptide" evidence="3">
    <location>
        <begin position="1"/>
        <end position="20"/>
    </location>
</feature>
<feature type="chain" id="PRO_0000379707" description="Protein LURE 1.6">
    <location>
        <begin position="21"/>
        <end position="91"/>
    </location>
</feature>
<feature type="disulfide bond" evidence="1">
    <location>
        <begin position="59"/>
        <end position="76"/>
    </location>
</feature>
<feature type="disulfide bond" evidence="1">
    <location>
        <begin position="62"/>
        <end position="83"/>
    </location>
</feature>
<feature type="disulfide bond" evidence="1">
    <location>
        <begin position="66"/>
        <end position="85"/>
    </location>
</feature>
<gene>
    <name evidence="5" type="primary">LURE1.6</name>
    <name evidence="5" type="synonym">CRP810_1.6</name>
    <name type="ordered locus">At5g43516</name>
    <name evidence="7" type="ORF">K9D7</name>
    <name evidence="8" type="ORF">MWF20</name>
</gene>
<name>LUR16_ARATH</name>
<organism>
    <name type="scientific">Arabidopsis thaliana</name>
    <name type="common">Mouse-ear cress</name>
    <dbReference type="NCBI Taxonomy" id="3702"/>
    <lineage>
        <taxon>Eukaryota</taxon>
        <taxon>Viridiplantae</taxon>
        <taxon>Streptophyta</taxon>
        <taxon>Embryophyta</taxon>
        <taxon>Tracheophyta</taxon>
        <taxon>Spermatophyta</taxon>
        <taxon>Magnoliopsida</taxon>
        <taxon>eudicotyledons</taxon>
        <taxon>Gunneridae</taxon>
        <taxon>Pentapetalae</taxon>
        <taxon>rosids</taxon>
        <taxon>malvids</taxon>
        <taxon>Brassicales</taxon>
        <taxon>Brassicaceae</taxon>
        <taxon>Camelineae</taxon>
        <taxon>Arabidopsis</taxon>
    </lineage>
</organism>
<evidence type="ECO:0000250" key="1">
    <source>
        <dbReference type="UniProtKB" id="Q09198"/>
    </source>
</evidence>
<evidence type="ECO:0000250" key="2">
    <source>
        <dbReference type="UniProtKB" id="Q4VP10"/>
    </source>
</evidence>
<evidence type="ECO:0000255" key="3"/>
<evidence type="ECO:0000303" key="4">
    <source>
    </source>
</evidence>
<evidence type="ECO:0000303" key="5">
    <source>
    </source>
</evidence>
<evidence type="ECO:0000305" key="6"/>
<evidence type="ECO:0000312" key="7">
    <source>
        <dbReference type="EMBL" id="AB016875"/>
    </source>
</evidence>
<evidence type="ECO:0000312" key="8">
    <source>
        <dbReference type="EMBL" id="AB025638"/>
    </source>
</evidence>